<feature type="chain" id="PRO_0000192375" description="Shikimate kinase">
    <location>
        <begin position="1"/>
        <end position="169"/>
    </location>
</feature>
<feature type="binding site" evidence="1">
    <location>
        <begin position="13"/>
        <end position="18"/>
    </location>
    <ligand>
        <name>ATP</name>
        <dbReference type="ChEBI" id="CHEBI:30616"/>
    </ligand>
</feature>
<feature type="binding site" evidence="1">
    <location>
        <position position="17"/>
    </location>
    <ligand>
        <name>Mg(2+)</name>
        <dbReference type="ChEBI" id="CHEBI:18420"/>
    </ligand>
</feature>
<feature type="binding site" evidence="1">
    <location>
        <position position="35"/>
    </location>
    <ligand>
        <name>substrate</name>
    </ligand>
</feature>
<feature type="binding site" evidence="1">
    <location>
        <position position="59"/>
    </location>
    <ligand>
        <name>substrate</name>
    </ligand>
</feature>
<feature type="binding site" evidence="1">
    <location>
        <position position="80"/>
    </location>
    <ligand>
        <name>substrate</name>
    </ligand>
</feature>
<feature type="binding site" evidence="1">
    <location>
        <position position="117"/>
    </location>
    <ligand>
        <name>ATP</name>
        <dbReference type="ChEBI" id="CHEBI:30616"/>
    </ligand>
</feature>
<feature type="binding site" evidence="1">
    <location>
        <position position="136"/>
    </location>
    <ligand>
        <name>substrate</name>
    </ligand>
</feature>
<feature type="binding site" evidence="1">
    <location>
        <position position="153"/>
    </location>
    <ligand>
        <name>ATP</name>
        <dbReference type="ChEBI" id="CHEBI:30616"/>
    </ligand>
</feature>
<dbReference type="EC" id="2.7.1.71" evidence="1"/>
<dbReference type="EMBL" id="BA000035">
    <property type="protein sequence ID" value="BAC18551.1"/>
    <property type="molecule type" value="Genomic_DNA"/>
</dbReference>
<dbReference type="RefSeq" id="WP_011075585.1">
    <property type="nucleotide sequence ID" value="NC_004369.1"/>
</dbReference>
<dbReference type="SMR" id="Q8FT30"/>
<dbReference type="STRING" id="196164.gene:10742162"/>
<dbReference type="KEGG" id="cef:CE1741"/>
<dbReference type="eggNOG" id="COG0703">
    <property type="taxonomic scope" value="Bacteria"/>
</dbReference>
<dbReference type="HOGENOM" id="CLU_057607_3_0_11"/>
<dbReference type="OrthoDB" id="9800332at2"/>
<dbReference type="UniPathway" id="UPA00053">
    <property type="reaction ID" value="UER00088"/>
</dbReference>
<dbReference type="Proteomes" id="UP000001409">
    <property type="component" value="Chromosome"/>
</dbReference>
<dbReference type="GO" id="GO:0005829">
    <property type="term" value="C:cytosol"/>
    <property type="evidence" value="ECO:0007669"/>
    <property type="project" value="TreeGrafter"/>
</dbReference>
<dbReference type="GO" id="GO:0005524">
    <property type="term" value="F:ATP binding"/>
    <property type="evidence" value="ECO:0007669"/>
    <property type="project" value="UniProtKB-UniRule"/>
</dbReference>
<dbReference type="GO" id="GO:0000287">
    <property type="term" value="F:magnesium ion binding"/>
    <property type="evidence" value="ECO:0007669"/>
    <property type="project" value="UniProtKB-UniRule"/>
</dbReference>
<dbReference type="GO" id="GO:0004765">
    <property type="term" value="F:shikimate kinase activity"/>
    <property type="evidence" value="ECO:0007669"/>
    <property type="project" value="UniProtKB-UniRule"/>
</dbReference>
<dbReference type="GO" id="GO:0008652">
    <property type="term" value="P:amino acid biosynthetic process"/>
    <property type="evidence" value="ECO:0007669"/>
    <property type="project" value="UniProtKB-KW"/>
</dbReference>
<dbReference type="GO" id="GO:0009073">
    <property type="term" value="P:aromatic amino acid family biosynthetic process"/>
    <property type="evidence" value="ECO:0007669"/>
    <property type="project" value="UniProtKB-KW"/>
</dbReference>
<dbReference type="GO" id="GO:0009423">
    <property type="term" value="P:chorismate biosynthetic process"/>
    <property type="evidence" value="ECO:0007669"/>
    <property type="project" value="UniProtKB-UniRule"/>
</dbReference>
<dbReference type="CDD" id="cd00464">
    <property type="entry name" value="SK"/>
    <property type="match status" value="1"/>
</dbReference>
<dbReference type="Gene3D" id="3.40.50.300">
    <property type="entry name" value="P-loop containing nucleotide triphosphate hydrolases"/>
    <property type="match status" value="1"/>
</dbReference>
<dbReference type="HAMAP" id="MF_00109">
    <property type="entry name" value="Shikimate_kinase"/>
    <property type="match status" value="1"/>
</dbReference>
<dbReference type="InterPro" id="IPR027417">
    <property type="entry name" value="P-loop_NTPase"/>
</dbReference>
<dbReference type="InterPro" id="IPR031322">
    <property type="entry name" value="Shikimate/glucono_kinase"/>
</dbReference>
<dbReference type="InterPro" id="IPR000623">
    <property type="entry name" value="Shikimate_kinase/TSH1"/>
</dbReference>
<dbReference type="InterPro" id="IPR023000">
    <property type="entry name" value="Shikimate_kinase_CS"/>
</dbReference>
<dbReference type="PANTHER" id="PTHR21087">
    <property type="entry name" value="SHIKIMATE KINASE"/>
    <property type="match status" value="1"/>
</dbReference>
<dbReference type="PANTHER" id="PTHR21087:SF16">
    <property type="entry name" value="SHIKIMATE KINASE 1, CHLOROPLASTIC"/>
    <property type="match status" value="1"/>
</dbReference>
<dbReference type="Pfam" id="PF01202">
    <property type="entry name" value="SKI"/>
    <property type="match status" value="1"/>
</dbReference>
<dbReference type="PRINTS" id="PR01100">
    <property type="entry name" value="SHIKIMTKNASE"/>
</dbReference>
<dbReference type="SUPFAM" id="SSF52540">
    <property type="entry name" value="P-loop containing nucleoside triphosphate hydrolases"/>
    <property type="match status" value="1"/>
</dbReference>
<dbReference type="PROSITE" id="PS01128">
    <property type="entry name" value="SHIKIMATE_KINASE"/>
    <property type="match status" value="1"/>
</dbReference>
<keyword id="KW-0028">Amino-acid biosynthesis</keyword>
<keyword id="KW-0057">Aromatic amino acid biosynthesis</keyword>
<keyword id="KW-0067">ATP-binding</keyword>
<keyword id="KW-0963">Cytoplasm</keyword>
<keyword id="KW-0418">Kinase</keyword>
<keyword id="KW-0460">Magnesium</keyword>
<keyword id="KW-0479">Metal-binding</keyword>
<keyword id="KW-0547">Nucleotide-binding</keyword>
<keyword id="KW-1185">Reference proteome</keyword>
<keyword id="KW-0808">Transferase</keyword>
<name>AROK_COREF</name>
<reference key="1">
    <citation type="journal article" date="2003" name="Genome Res.">
        <title>Comparative complete genome sequence analysis of the amino acid replacements responsible for the thermostability of Corynebacterium efficiens.</title>
        <authorList>
            <person name="Nishio Y."/>
            <person name="Nakamura Y."/>
            <person name="Kawarabayasi Y."/>
            <person name="Usuda Y."/>
            <person name="Kimura E."/>
            <person name="Sugimoto S."/>
            <person name="Matsui K."/>
            <person name="Yamagishi A."/>
            <person name="Kikuchi H."/>
            <person name="Ikeo K."/>
            <person name="Gojobori T."/>
        </authorList>
    </citation>
    <scope>NUCLEOTIDE SEQUENCE [LARGE SCALE GENOMIC DNA]</scope>
    <source>
        <strain>DSM 44549 / YS-314 / AJ 12310 / JCM 11189 / NBRC 100395</strain>
    </source>
</reference>
<accession>Q8FT30</accession>
<sequence>MARPIVVLVGPPGAGKSTIGRRLARALNADLVDSDELIEKATGKACGEVFSELGEPAFRELEAHHVAEALNHDGVVSLGGGAILTESTRELLREHDVVWIDVSVAEGVRRTAGERTRPVLAADDPVEHYRNLLETRRPLYEEVSTFRVRTNSRSPQQVVAEILHHLEDD</sequence>
<organism>
    <name type="scientific">Corynebacterium efficiens (strain DSM 44549 / YS-314 / AJ 12310 / JCM 11189 / NBRC 100395)</name>
    <dbReference type="NCBI Taxonomy" id="196164"/>
    <lineage>
        <taxon>Bacteria</taxon>
        <taxon>Bacillati</taxon>
        <taxon>Actinomycetota</taxon>
        <taxon>Actinomycetes</taxon>
        <taxon>Mycobacteriales</taxon>
        <taxon>Corynebacteriaceae</taxon>
        <taxon>Corynebacterium</taxon>
    </lineage>
</organism>
<evidence type="ECO:0000255" key="1">
    <source>
        <dbReference type="HAMAP-Rule" id="MF_00109"/>
    </source>
</evidence>
<protein>
    <recommendedName>
        <fullName evidence="1">Shikimate kinase</fullName>
        <shortName evidence="1">SK</shortName>
        <ecNumber evidence="1">2.7.1.71</ecNumber>
    </recommendedName>
</protein>
<proteinExistence type="inferred from homology"/>
<gene>
    <name evidence="1" type="primary">aroK</name>
    <name type="ordered locus">CE1741</name>
</gene>
<comment type="function">
    <text evidence="1">Catalyzes the specific phosphorylation of the 3-hydroxyl group of shikimic acid using ATP as a cosubstrate.</text>
</comment>
<comment type="catalytic activity">
    <reaction evidence="1">
        <text>shikimate + ATP = 3-phosphoshikimate + ADP + H(+)</text>
        <dbReference type="Rhea" id="RHEA:13121"/>
        <dbReference type="ChEBI" id="CHEBI:15378"/>
        <dbReference type="ChEBI" id="CHEBI:30616"/>
        <dbReference type="ChEBI" id="CHEBI:36208"/>
        <dbReference type="ChEBI" id="CHEBI:145989"/>
        <dbReference type="ChEBI" id="CHEBI:456216"/>
        <dbReference type="EC" id="2.7.1.71"/>
    </reaction>
</comment>
<comment type="cofactor">
    <cofactor evidence="1">
        <name>Mg(2+)</name>
        <dbReference type="ChEBI" id="CHEBI:18420"/>
    </cofactor>
    <text evidence="1">Binds 1 Mg(2+) ion per subunit.</text>
</comment>
<comment type="pathway">
    <text evidence="1">Metabolic intermediate biosynthesis; chorismate biosynthesis; chorismate from D-erythrose 4-phosphate and phosphoenolpyruvate: step 5/7.</text>
</comment>
<comment type="subunit">
    <text evidence="1">Monomer.</text>
</comment>
<comment type="subcellular location">
    <subcellularLocation>
        <location evidence="1">Cytoplasm</location>
    </subcellularLocation>
</comment>
<comment type="similarity">
    <text evidence="1">Belongs to the shikimate kinase family.</text>
</comment>